<feature type="chain" id="PRO_0000232299" description="ATP-dependent RNA helicase rok1">
    <location>
        <begin position="1"/>
        <end position="725"/>
    </location>
</feature>
<feature type="domain" description="Helicase ATP-binding" evidence="2">
    <location>
        <begin position="223"/>
        <end position="434"/>
    </location>
</feature>
<feature type="domain" description="Helicase C-terminal" evidence="3">
    <location>
        <begin position="474"/>
        <end position="642"/>
    </location>
</feature>
<feature type="region of interest" description="Disordered" evidence="4">
    <location>
        <begin position="1"/>
        <end position="165"/>
    </location>
</feature>
<feature type="region of interest" description="Disordered" evidence="4">
    <location>
        <begin position="307"/>
        <end position="344"/>
    </location>
</feature>
<feature type="region of interest" description="Disordered" evidence="4">
    <location>
        <begin position="649"/>
        <end position="725"/>
    </location>
</feature>
<feature type="short sequence motif" description="Q motif">
    <location>
        <begin position="179"/>
        <end position="207"/>
    </location>
</feature>
<feature type="short sequence motif" description="DEAD box">
    <location>
        <begin position="381"/>
        <end position="384"/>
    </location>
</feature>
<feature type="compositionally biased region" description="Low complexity" evidence="4">
    <location>
        <begin position="14"/>
        <end position="30"/>
    </location>
</feature>
<feature type="compositionally biased region" description="Basic and acidic residues" evidence="4">
    <location>
        <begin position="39"/>
        <end position="50"/>
    </location>
</feature>
<feature type="compositionally biased region" description="Basic and acidic residues" evidence="4">
    <location>
        <begin position="84"/>
        <end position="98"/>
    </location>
</feature>
<feature type="compositionally biased region" description="Acidic residues" evidence="4">
    <location>
        <begin position="309"/>
        <end position="332"/>
    </location>
</feature>
<feature type="compositionally biased region" description="Basic and acidic residues" evidence="4">
    <location>
        <begin position="684"/>
        <end position="693"/>
    </location>
</feature>
<feature type="binding site" evidence="2">
    <location>
        <begin position="236"/>
        <end position="243"/>
    </location>
    <ligand>
        <name>ATP</name>
        <dbReference type="ChEBI" id="CHEBI:30616"/>
    </ligand>
</feature>
<comment type="function">
    <text>ATP-dependent RNA helicase involved in 40S ribosomal subunit biogenesis. Required for the processing and cleavage of 35S pre-rRNA at sites A0, A1, and A2, leading to mature 18S rRNA.</text>
</comment>
<comment type="catalytic activity">
    <reaction>
        <text>ATP + H2O = ADP + phosphate + H(+)</text>
        <dbReference type="Rhea" id="RHEA:13065"/>
        <dbReference type="ChEBI" id="CHEBI:15377"/>
        <dbReference type="ChEBI" id="CHEBI:15378"/>
        <dbReference type="ChEBI" id="CHEBI:30616"/>
        <dbReference type="ChEBI" id="CHEBI:43474"/>
        <dbReference type="ChEBI" id="CHEBI:456216"/>
        <dbReference type="EC" id="3.6.4.13"/>
    </reaction>
</comment>
<comment type="subunit">
    <text evidence="1">Interacts with the U3 snoRNA and is associated with the 90S and 40S pre-ribosomes.</text>
</comment>
<comment type="subcellular location">
    <subcellularLocation>
        <location evidence="1">Nucleus</location>
        <location evidence="1">Nucleolus</location>
    </subcellularLocation>
</comment>
<comment type="domain">
    <text>The Q motif is unique to and characteristic of the DEAD box family of RNA helicases and controls ATP binding and hydrolysis.</text>
</comment>
<comment type="similarity">
    <text evidence="5">Belongs to the DEAD box helicase family. DDX52/ROK1 subfamily.</text>
</comment>
<proteinExistence type="inferred from homology"/>
<keyword id="KW-0067">ATP-binding</keyword>
<keyword id="KW-0347">Helicase</keyword>
<keyword id="KW-0378">Hydrolase</keyword>
<keyword id="KW-0547">Nucleotide-binding</keyword>
<keyword id="KW-0539">Nucleus</keyword>
<keyword id="KW-1185">Reference proteome</keyword>
<keyword id="KW-0690">Ribosome biogenesis</keyword>
<keyword id="KW-0694">RNA-binding</keyword>
<keyword id="KW-0698">rRNA processing</keyword>
<reference key="1">
    <citation type="journal article" date="2005" name="Nature">
        <title>Genome sequencing and analysis of Aspergillus oryzae.</title>
        <authorList>
            <person name="Machida M."/>
            <person name="Asai K."/>
            <person name="Sano M."/>
            <person name="Tanaka T."/>
            <person name="Kumagai T."/>
            <person name="Terai G."/>
            <person name="Kusumoto K."/>
            <person name="Arima T."/>
            <person name="Akita O."/>
            <person name="Kashiwagi Y."/>
            <person name="Abe K."/>
            <person name="Gomi K."/>
            <person name="Horiuchi H."/>
            <person name="Kitamoto K."/>
            <person name="Kobayashi T."/>
            <person name="Takeuchi M."/>
            <person name="Denning D.W."/>
            <person name="Galagan J.E."/>
            <person name="Nierman W.C."/>
            <person name="Yu J."/>
            <person name="Archer D.B."/>
            <person name="Bennett J.W."/>
            <person name="Bhatnagar D."/>
            <person name="Cleveland T.E."/>
            <person name="Fedorova N.D."/>
            <person name="Gotoh O."/>
            <person name="Horikawa H."/>
            <person name="Hosoyama A."/>
            <person name="Ichinomiya M."/>
            <person name="Igarashi R."/>
            <person name="Iwashita K."/>
            <person name="Juvvadi P.R."/>
            <person name="Kato M."/>
            <person name="Kato Y."/>
            <person name="Kin T."/>
            <person name="Kokubun A."/>
            <person name="Maeda H."/>
            <person name="Maeyama N."/>
            <person name="Maruyama J."/>
            <person name="Nagasaki H."/>
            <person name="Nakajima T."/>
            <person name="Oda K."/>
            <person name="Okada K."/>
            <person name="Paulsen I."/>
            <person name="Sakamoto K."/>
            <person name="Sawano T."/>
            <person name="Takahashi M."/>
            <person name="Takase K."/>
            <person name="Terabayashi Y."/>
            <person name="Wortman J.R."/>
            <person name="Yamada O."/>
            <person name="Yamagata Y."/>
            <person name="Anazawa H."/>
            <person name="Hata Y."/>
            <person name="Koide Y."/>
            <person name="Komori T."/>
            <person name="Koyama Y."/>
            <person name="Minetoki T."/>
            <person name="Suharnan S."/>
            <person name="Tanaka A."/>
            <person name="Isono K."/>
            <person name="Kuhara S."/>
            <person name="Ogasawara N."/>
            <person name="Kikuchi H."/>
        </authorList>
    </citation>
    <scope>NUCLEOTIDE SEQUENCE [LARGE SCALE GENOMIC DNA]</scope>
    <source>
        <strain>ATCC 42149 / RIB 40</strain>
    </source>
</reference>
<name>ROK1_ASPOR</name>
<accession>Q2UQW3</accession>
<organism>
    <name type="scientific">Aspergillus oryzae (strain ATCC 42149 / RIB 40)</name>
    <name type="common">Yellow koji mold</name>
    <dbReference type="NCBI Taxonomy" id="510516"/>
    <lineage>
        <taxon>Eukaryota</taxon>
        <taxon>Fungi</taxon>
        <taxon>Dikarya</taxon>
        <taxon>Ascomycota</taxon>
        <taxon>Pezizomycotina</taxon>
        <taxon>Eurotiomycetes</taxon>
        <taxon>Eurotiomycetidae</taxon>
        <taxon>Eurotiales</taxon>
        <taxon>Aspergillaceae</taxon>
        <taxon>Aspergillus</taxon>
        <taxon>Aspergillus subgen. Circumdati</taxon>
    </lineage>
</organism>
<evidence type="ECO:0000250" key="1"/>
<evidence type="ECO:0000255" key="2">
    <source>
        <dbReference type="PROSITE-ProRule" id="PRU00541"/>
    </source>
</evidence>
<evidence type="ECO:0000255" key="3">
    <source>
        <dbReference type="PROSITE-ProRule" id="PRU00542"/>
    </source>
</evidence>
<evidence type="ECO:0000256" key="4">
    <source>
        <dbReference type="SAM" id="MobiDB-lite"/>
    </source>
</evidence>
<evidence type="ECO:0000305" key="5"/>
<sequence>MDAFKLLTRSTKFKTGPSSSSASLPSTGKAENPQLFRNSEAEKLLEEQKNGKKRKRGSAADEPEEREPNLDFFSSNKGSSKKVVKAEEAPSDEERGSGSEDEDEMDEVQRRTILNSHKIKVTDMRELEEIQPVQAQGEEEPKKKKKKRKQKEEPAQTLTKKEQKKARRLFPRPLVSFKELRTQYKISRRLAENITEQGFTVPTEVQLGTLPLLLGDRTIGQSKTEEPVEPDLLVVAPTGSGKTLSFLIPVINKIVRHHHGQQEERGIFAVVVAPTKELASQIVNEGRKLVSGTGVKITLMKKGMQVVEREDDDEDVLDEGSSESSESEDDEKTTEKKSKGKAPVTKSDILVTTPLQLVNALSANKTKPMATLPLVRNIVLDEADVLLDPLFREQTLDIWRACTHPELRASLWSATMGSSIEDLAKSTIKERKDASSLTKSYPLYRLVVGLKDSAIPNIQHKLVYAATEQGKLLGLRQLLHPAAAAASDIRLRPPFLIFTQTIPRAVALHSELRYDIPPEAGGSSRIAVLHSDLSDGQRSEIMKNFRKGEIWILVTTDLLARGIDFRGINGVVNYDIPNSAAVYVHRVGRTGRAGREGGVAVTYYTKEDIPYVKSIANVIDVSEKLRGTEGEKSVQKWLLDSLPDLSKKDKKELKKHGVRARQTNLKSVADDKQQRKTRISTKSGFERRMENKKKGAIAASRNRKLQGPSGAEPDSGDDGWGGIQE</sequence>
<dbReference type="EC" id="3.6.4.13"/>
<dbReference type="EMBL" id="BA000049">
    <property type="protein sequence ID" value="BAE56052.1"/>
    <property type="molecule type" value="Genomic_DNA"/>
</dbReference>
<dbReference type="RefSeq" id="XP_001818054.1">
    <property type="nucleotide sequence ID" value="XM_001818002.1"/>
</dbReference>
<dbReference type="SMR" id="Q2UQW3"/>
<dbReference type="STRING" id="510516.Q2UQW3"/>
<dbReference type="EnsemblFungi" id="BAE56052">
    <property type="protein sequence ID" value="BAE56052"/>
    <property type="gene ID" value="AO090005001076"/>
</dbReference>
<dbReference type="GeneID" id="5989999"/>
<dbReference type="KEGG" id="aor:AO090005001076"/>
<dbReference type="VEuPathDB" id="FungiDB:AO090005001076"/>
<dbReference type="HOGENOM" id="CLU_003041_1_4_1"/>
<dbReference type="OMA" id="FRAGEIW"/>
<dbReference type="OrthoDB" id="103878at5052"/>
<dbReference type="Proteomes" id="UP000006564">
    <property type="component" value="Chromosome 1"/>
</dbReference>
<dbReference type="GO" id="GO:0005829">
    <property type="term" value="C:cytosol"/>
    <property type="evidence" value="ECO:0007669"/>
    <property type="project" value="TreeGrafter"/>
</dbReference>
<dbReference type="GO" id="GO:0005730">
    <property type="term" value="C:nucleolus"/>
    <property type="evidence" value="ECO:0007669"/>
    <property type="project" value="UniProtKB-SubCell"/>
</dbReference>
<dbReference type="GO" id="GO:0005524">
    <property type="term" value="F:ATP binding"/>
    <property type="evidence" value="ECO:0007669"/>
    <property type="project" value="UniProtKB-KW"/>
</dbReference>
<dbReference type="GO" id="GO:0016887">
    <property type="term" value="F:ATP hydrolysis activity"/>
    <property type="evidence" value="ECO:0007669"/>
    <property type="project" value="RHEA"/>
</dbReference>
<dbReference type="GO" id="GO:0003723">
    <property type="term" value="F:RNA binding"/>
    <property type="evidence" value="ECO:0007669"/>
    <property type="project" value="UniProtKB-KW"/>
</dbReference>
<dbReference type="GO" id="GO:0003724">
    <property type="term" value="F:RNA helicase activity"/>
    <property type="evidence" value="ECO:0007669"/>
    <property type="project" value="UniProtKB-EC"/>
</dbReference>
<dbReference type="GO" id="GO:0030490">
    <property type="term" value="P:maturation of SSU-rRNA"/>
    <property type="evidence" value="ECO:0007669"/>
    <property type="project" value="InterPro"/>
</dbReference>
<dbReference type="CDD" id="cd17957">
    <property type="entry name" value="DEADc_DDX52"/>
    <property type="match status" value="1"/>
</dbReference>
<dbReference type="CDD" id="cd18787">
    <property type="entry name" value="SF2_C_DEAD"/>
    <property type="match status" value="1"/>
</dbReference>
<dbReference type="Gene3D" id="3.40.50.300">
    <property type="entry name" value="P-loop containing nucleotide triphosphate hydrolases"/>
    <property type="match status" value="2"/>
</dbReference>
<dbReference type="InterPro" id="IPR044764">
    <property type="entry name" value="DDX52/Rok1_DEADc"/>
</dbReference>
<dbReference type="InterPro" id="IPR011545">
    <property type="entry name" value="DEAD/DEAH_box_helicase_dom"/>
</dbReference>
<dbReference type="InterPro" id="IPR050079">
    <property type="entry name" value="DEAD_box_RNA_helicase"/>
</dbReference>
<dbReference type="InterPro" id="IPR014001">
    <property type="entry name" value="Helicase_ATP-bd"/>
</dbReference>
<dbReference type="InterPro" id="IPR001650">
    <property type="entry name" value="Helicase_C-like"/>
</dbReference>
<dbReference type="InterPro" id="IPR027417">
    <property type="entry name" value="P-loop_NTPase"/>
</dbReference>
<dbReference type="PANTHER" id="PTHR47959">
    <property type="entry name" value="ATP-DEPENDENT RNA HELICASE RHLE-RELATED"/>
    <property type="match status" value="1"/>
</dbReference>
<dbReference type="PANTHER" id="PTHR47959:SF15">
    <property type="entry name" value="RNA HELICASE"/>
    <property type="match status" value="1"/>
</dbReference>
<dbReference type="Pfam" id="PF00270">
    <property type="entry name" value="DEAD"/>
    <property type="match status" value="1"/>
</dbReference>
<dbReference type="Pfam" id="PF00271">
    <property type="entry name" value="Helicase_C"/>
    <property type="match status" value="1"/>
</dbReference>
<dbReference type="SMART" id="SM00487">
    <property type="entry name" value="DEXDc"/>
    <property type="match status" value="1"/>
</dbReference>
<dbReference type="SMART" id="SM00490">
    <property type="entry name" value="HELICc"/>
    <property type="match status" value="1"/>
</dbReference>
<dbReference type="SUPFAM" id="SSF52540">
    <property type="entry name" value="P-loop containing nucleoside triphosphate hydrolases"/>
    <property type="match status" value="1"/>
</dbReference>
<dbReference type="PROSITE" id="PS51192">
    <property type="entry name" value="HELICASE_ATP_BIND_1"/>
    <property type="match status" value="1"/>
</dbReference>
<dbReference type="PROSITE" id="PS51194">
    <property type="entry name" value="HELICASE_CTER"/>
    <property type="match status" value="1"/>
</dbReference>
<dbReference type="PROSITE" id="PS51195">
    <property type="entry name" value="Q_MOTIF"/>
    <property type="match status" value="1"/>
</dbReference>
<gene>
    <name type="primary">rok1</name>
    <name type="ORF">AO090005001076</name>
</gene>
<protein>
    <recommendedName>
        <fullName>ATP-dependent RNA helicase rok1</fullName>
        <ecNumber>3.6.4.13</ecNumber>
    </recommendedName>
</protein>